<feature type="chain" id="PRO_1000083015" description="Co-chaperone protein HscB homolog">
    <location>
        <begin position="1"/>
        <end position="166"/>
    </location>
</feature>
<feature type="domain" description="J" evidence="1">
    <location>
        <begin position="3"/>
        <end position="75"/>
    </location>
</feature>
<reference key="1">
    <citation type="journal article" date="2007" name="PLoS Genet.">
        <title>Meningococcal genetic variation mechanisms viewed through comparative analysis of serogroup C strain FAM18.</title>
        <authorList>
            <person name="Bentley S.D."/>
            <person name="Vernikos G.S."/>
            <person name="Snyder L.A.S."/>
            <person name="Churcher C."/>
            <person name="Arrowsmith C."/>
            <person name="Chillingworth T."/>
            <person name="Cronin A."/>
            <person name="Davis P.H."/>
            <person name="Holroyd N.E."/>
            <person name="Jagels K."/>
            <person name="Maddison M."/>
            <person name="Moule S."/>
            <person name="Rabbinowitsch E."/>
            <person name="Sharp S."/>
            <person name="Unwin L."/>
            <person name="Whitehead S."/>
            <person name="Quail M.A."/>
            <person name="Achtman M."/>
            <person name="Barrell B.G."/>
            <person name="Saunders N.J."/>
            <person name="Parkhill J."/>
        </authorList>
    </citation>
    <scope>NUCLEOTIDE SEQUENCE [LARGE SCALE GENOMIC DNA]</scope>
    <source>
        <strain>ATCC 700532 / DSM 15464 / FAM18</strain>
    </source>
</reference>
<sequence length="166" mass="19131">MSQYFTLFRIEPAFDIDTENLEQTYRALAARFHPDKFASASAFEQKQAVMMSSTINDAYRTLKNPIDRAAYLLKTSGIDADAPEHTAFAPEFLMQQMEWRETLMEARAGNDLESLKNLDNEIRDEQEKLFCGLKQSFARQDYDTAAQQVRQGRFLDKLRNEISSAL</sequence>
<organism>
    <name type="scientific">Neisseria meningitidis serogroup C / serotype 2a (strain ATCC 700532 / DSM 15464 / FAM18)</name>
    <dbReference type="NCBI Taxonomy" id="272831"/>
    <lineage>
        <taxon>Bacteria</taxon>
        <taxon>Pseudomonadati</taxon>
        <taxon>Pseudomonadota</taxon>
        <taxon>Betaproteobacteria</taxon>
        <taxon>Neisseriales</taxon>
        <taxon>Neisseriaceae</taxon>
        <taxon>Neisseria</taxon>
    </lineage>
</organism>
<proteinExistence type="inferred from homology"/>
<accession>A1KUK4</accession>
<name>HSCB_NEIMF</name>
<protein>
    <recommendedName>
        <fullName evidence="1">Co-chaperone protein HscB homolog</fullName>
    </recommendedName>
</protein>
<keyword id="KW-0143">Chaperone</keyword>
<dbReference type="EMBL" id="AM421808">
    <property type="protein sequence ID" value="CAM10547.1"/>
    <property type="molecule type" value="Genomic_DNA"/>
</dbReference>
<dbReference type="RefSeq" id="WP_002219110.1">
    <property type="nucleotide sequence ID" value="NC_008767.1"/>
</dbReference>
<dbReference type="SMR" id="A1KUK4"/>
<dbReference type="GeneID" id="83616005"/>
<dbReference type="KEGG" id="nmc:NMC1319"/>
<dbReference type="HOGENOM" id="CLU_068529_2_0_4"/>
<dbReference type="Proteomes" id="UP000002286">
    <property type="component" value="Chromosome"/>
</dbReference>
<dbReference type="GO" id="GO:1990230">
    <property type="term" value="C:iron-sulfur cluster transfer complex"/>
    <property type="evidence" value="ECO:0007669"/>
    <property type="project" value="TreeGrafter"/>
</dbReference>
<dbReference type="GO" id="GO:0001671">
    <property type="term" value="F:ATPase activator activity"/>
    <property type="evidence" value="ECO:0007669"/>
    <property type="project" value="InterPro"/>
</dbReference>
<dbReference type="GO" id="GO:0051087">
    <property type="term" value="F:protein-folding chaperone binding"/>
    <property type="evidence" value="ECO:0007669"/>
    <property type="project" value="InterPro"/>
</dbReference>
<dbReference type="GO" id="GO:0044571">
    <property type="term" value="P:[2Fe-2S] cluster assembly"/>
    <property type="evidence" value="ECO:0007669"/>
    <property type="project" value="InterPro"/>
</dbReference>
<dbReference type="GO" id="GO:0051259">
    <property type="term" value="P:protein complex oligomerization"/>
    <property type="evidence" value="ECO:0007669"/>
    <property type="project" value="InterPro"/>
</dbReference>
<dbReference type="GO" id="GO:0006457">
    <property type="term" value="P:protein folding"/>
    <property type="evidence" value="ECO:0007669"/>
    <property type="project" value="UniProtKB-UniRule"/>
</dbReference>
<dbReference type="CDD" id="cd06257">
    <property type="entry name" value="DnaJ"/>
    <property type="match status" value="1"/>
</dbReference>
<dbReference type="FunFam" id="1.10.287.110:FF:000088">
    <property type="entry name" value="Co-chaperone protein HscB homolog"/>
    <property type="match status" value="1"/>
</dbReference>
<dbReference type="FunFam" id="1.20.1280.20:FF:000004">
    <property type="entry name" value="Co-chaperone protein HscB homolog"/>
    <property type="match status" value="1"/>
</dbReference>
<dbReference type="Gene3D" id="1.10.287.110">
    <property type="entry name" value="DnaJ domain"/>
    <property type="match status" value="1"/>
</dbReference>
<dbReference type="Gene3D" id="1.20.1280.20">
    <property type="entry name" value="HscB, C-terminal domain"/>
    <property type="match status" value="1"/>
</dbReference>
<dbReference type="HAMAP" id="MF_00682">
    <property type="entry name" value="HscB"/>
    <property type="match status" value="1"/>
</dbReference>
<dbReference type="InterPro" id="IPR001623">
    <property type="entry name" value="DnaJ_domain"/>
</dbReference>
<dbReference type="InterPro" id="IPR004640">
    <property type="entry name" value="HscB"/>
</dbReference>
<dbReference type="InterPro" id="IPR036386">
    <property type="entry name" value="HscB_C_sf"/>
</dbReference>
<dbReference type="InterPro" id="IPR009073">
    <property type="entry name" value="HscB_oligo_C"/>
</dbReference>
<dbReference type="InterPro" id="IPR036869">
    <property type="entry name" value="J_dom_sf"/>
</dbReference>
<dbReference type="NCBIfam" id="TIGR00714">
    <property type="entry name" value="hscB"/>
    <property type="match status" value="1"/>
</dbReference>
<dbReference type="PANTHER" id="PTHR14021">
    <property type="entry name" value="IRON-SULFUR CLUSTER CO-CHAPERONE PROTEIN HSCB"/>
    <property type="match status" value="1"/>
</dbReference>
<dbReference type="PANTHER" id="PTHR14021:SF15">
    <property type="entry name" value="IRON-SULFUR CLUSTER CO-CHAPERONE PROTEIN HSCB"/>
    <property type="match status" value="1"/>
</dbReference>
<dbReference type="Pfam" id="PF00226">
    <property type="entry name" value="DnaJ"/>
    <property type="match status" value="1"/>
</dbReference>
<dbReference type="Pfam" id="PF07743">
    <property type="entry name" value="HSCB_C"/>
    <property type="match status" value="1"/>
</dbReference>
<dbReference type="SMART" id="SM00271">
    <property type="entry name" value="DnaJ"/>
    <property type="match status" value="1"/>
</dbReference>
<dbReference type="SUPFAM" id="SSF46565">
    <property type="entry name" value="Chaperone J-domain"/>
    <property type="match status" value="1"/>
</dbReference>
<dbReference type="SUPFAM" id="SSF47144">
    <property type="entry name" value="HSC20 (HSCB), C-terminal oligomerisation domain"/>
    <property type="match status" value="1"/>
</dbReference>
<dbReference type="PROSITE" id="PS50076">
    <property type="entry name" value="DNAJ_2"/>
    <property type="match status" value="1"/>
</dbReference>
<gene>
    <name evidence="1" type="primary">hscB</name>
    <name type="ordered locus">NMC1319</name>
</gene>
<comment type="function">
    <text evidence="1">Co-chaperone involved in the maturation of iron-sulfur cluster-containing proteins. Seems to help targeting proteins to be folded toward HscA.</text>
</comment>
<comment type="subunit">
    <text evidence="1">Interacts with HscA and stimulates its ATPase activity.</text>
</comment>
<comment type="similarity">
    <text evidence="1">Belongs to the HscB family.</text>
</comment>
<evidence type="ECO:0000255" key="1">
    <source>
        <dbReference type="HAMAP-Rule" id="MF_00682"/>
    </source>
</evidence>